<reference key="1">
    <citation type="journal article" date="2014" name="Stand. Genomic Sci.">
        <title>Complete genome sequence of Anabaena variabilis ATCC 29413.</title>
        <authorList>
            <person name="Thiel T."/>
            <person name="Pratte B.S."/>
            <person name="Zhong J."/>
            <person name="Goodwin L."/>
            <person name="Copeland A."/>
            <person name="Lucas S."/>
            <person name="Han C."/>
            <person name="Pitluck S."/>
            <person name="Land M.L."/>
            <person name="Kyrpides N.C."/>
            <person name="Woyke T."/>
        </authorList>
    </citation>
    <scope>NUCLEOTIDE SEQUENCE [LARGE SCALE GENOMIC DNA]</scope>
    <source>
        <strain>ATCC 29413 / PCC 7937</strain>
    </source>
</reference>
<keyword id="KW-0560">Oxidoreductase</keyword>
<organism>
    <name type="scientific">Trichormus variabilis (strain ATCC 29413 / PCC 7937)</name>
    <name type="common">Anabaena variabilis</name>
    <dbReference type="NCBI Taxonomy" id="240292"/>
    <lineage>
        <taxon>Bacteria</taxon>
        <taxon>Bacillati</taxon>
        <taxon>Cyanobacteriota</taxon>
        <taxon>Cyanophyceae</taxon>
        <taxon>Nostocales</taxon>
        <taxon>Nostocaceae</taxon>
        <taxon>Trichormus</taxon>
    </lineage>
</organism>
<name>PCYA_TRIV2</name>
<evidence type="ECO:0000255" key="1">
    <source>
        <dbReference type="HAMAP-Rule" id="MF_00618"/>
    </source>
</evidence>
<comment type="function">
    <text evidence="1">Catalyzes the four-electron reduction of biliverdin IX-alpha (2-electron reduction at both the A and D rings); the reaction proceeds via an isolatable 2-electron intermediate, 181,182-dihydrobiliverdin.</text>
</comment>
<comment type="catalytic activity">
    <reaction evidence="1">
        <text>(2R,3Z)-phycocyanobilin + 4 oxidized [2Fe-2S]-[ferredoxin] = biliverdin IXalpha + 4 reduced [2Fe-2S]-[ferredoxin] + 4 H(+)</text>
        <dbReference type="Rhea" id="RHEA:15309"/>
        <dbReference type="Rhea" id="RHEA-COMP:10000"/>
        <dbReference type="Rhea" id="RHEA-COMP:10001"/>
        <dbReference type="ChEBI" id="CHEBI:15378"/>
        <dbReference type="ChEBI" id="CHEBI:33737"/>
        <dbReference type="ChEBI" id="CHEBI:33738"/>
        <dbReference type="ChEBI" id="CHEBI:57437"/>
        <dbReference type="ChEBI" id="CHEBI:57991"/>
        <dbReference type="EC" id="1.3.7.5"/>
    </reaction>
</comment>
<comment type="similarity">
    <text evidence="1">Belongs to the HY2 family.</text>
</comment>
<dbReference type="EC" id="1.3.7.5" evidence="1"/>
<dbReference type="EMBL" id="CP000117">
    <property type="protein sequence ID" value="ABA23191.1"/>
    <property type="molecule type" value="Genomic_DNA"/>
</dbReference>
<dbReference type="SMR" id="Q3M745"/>
<dbReference type="STRING" id="240292.Ava_3585"/>
<dbReference type="KEGG" id="ava:Ava_3585"/>
<dbReference type="eggNOG" id="ENOG502Z7RN">
    <property type="taxonomic scope" value="Bacteria"/>
</dbReference>
<dbReference type="HOGENOM" id="CLU_074224_0_0_3"/>
<dbReference type="Proteomes" id="UP000002533">
    <property type="component" value="Chromosome"/>
</dbReference>
<dbReference type="GO" id="GO:0050897">
    <property type="term" value="F:cobalt ion binding"/>
    <property type="evidence" value="ECO:0007669"/>
    <property type="project" value="InterPro"/>
</dbReference>
<dbReference type="GO" id="GO:0050620">
    <property type="term" value="F:phycocyanobilin:ferredoxin oxidoreductase activity"/>
    <property type="evidence" value="ECO:0007669"/>
    <property type="project" value="UniProtKB-UniRule"/>
</dbReference>
<dbReference type="GO" id="GO:0010024">
    <property type="term" value="P:phytochromobilin biosynthetic process"/>
    <property type="evidence" value="ECO:0007669"/>
    <property type="project" value="InterPro"/>
</dbReference>
<dbReference type="Gene3D" id="3.40.1500.20">
    <property type="match status" value="1"/>
</dbReference>
<dbReference type="HAMAP" id="MF_00618">
    <property type="entry name" value="Ferredoxin_bilin_red"/>
    <property type="match status" value="1"/>
</dbReference>
<dbReference type="InterPro" id="IPR009249">
    <property type="entry name" value="Ferredoxin-dep_bilin_Rdtase"/>
</dbReference>
<dbReference type="InterPro" id="IPR022870">
    <property type="entry name" value="Ferredoxin_bilin_OxRdtase"/>
</dbReference>
<dbReference type="NCBIfam" id="NF002760">
    <property type="entry name" value="PRK02816.1"/>
    <property type="match status" value="1"/>
</dbReference>
<dbReference type="PANTHER" id="PTHR34557">
    <property type="entry name" value="PHYTOCHROMOBILIN:FERREDOXIN OXIDOREDUCTASE, CHLOROPLASTIC"/>
    <property type="match status" value="1"/>
</dbReference>
<dbReference type="PANTHER" id="PTHR34557:SF1">
    <property type="entry name" value="PHYTOCHROMOBILIN:FERREDOXIN OXIDOREDUCTASE, CHLOROPLASTIC"/>
    <property type="match status" value="1"/>
</dbReference>
<dbReference type="Pfam" id="PF05996">
    <property type="entry name" value="Fe_bilin_red"/>
    <property type="match status" value="1"/>
</dbReference>
<proteinExistence type="inferred from homology"/>
<accession>Q3M745</accession>
<feature type="chain" id="PRO_1000061374" description="Phycocyanobilin:ferredoxin oxidoreductase">
    <location>
        <begin position="1"/>
        <end position="245"/>
    </location>
</feature>
<gene>
    <name evidence="1" type="primary">pcyA</name>
    <name type="ordered locus">Ava_3585</name>
</gene>
<protein>
    <recommendedName>
        <fullName evidence="1">Phycocyanobilin:ferredoxin oxidoreductase</fullName>
        <ecNumber evidence="1">1.3.7.5</ecNumber>
    </recommendedName>
</protein>
<sequence>MSLTSIPSLREQQHPLIRQLADCIEEVWHQHLDLSPYHLPAELGYVEGRLEGEKLTIENRCYQTPQFRKMHLELAKVGNMLDILHCVMFPRPEYDLPMFGCDLVGGRGQISAAIADLSPVHLDRTLPASYNSALTNLDTLNFSQPRELPEWGNIFSDFCIFVRPSSPEEEAMFLGRVREFLQVHCQGAIAASPVSAEQKQHILAGQHNYCSKQQQNDKTRRVLEKAFGTDWAENYMTTVLFDLPE</sequence>